<keyword id="KW-0028">Amino-acid biosynthesis</keyword>
<keyword id="KW-0061">Asparagine biosynthesis</keyword>
<keyword id="KW-0067">ATP-binding</keyword>
<keyword id="KW-0963">Cytoplasm</keyword>
<keyword id="KW-0436">Ligase</keyword>
<keyword id="KW-0547">Nucleotide-binding</keyword>
<sequence length="330" mass="36708">MKTAYIAKQRQISFVKSHFSRQLEERLGLIEVQAPILSRVGDGTQDNLSGCEKAVQVKVKALPDAQFEVVHSLAKWKRQTLGQHDFSAGEGLYTHMKALRPDEDRLSPLHSVYVDQWDWERVMGDGERQFSTLKSTVEAIWEGIKATEAAVSEEFGLAPFLPDQIHFVHSQELLSRYPDLDAKGRERAIAKDLGAVFLVGIGGKLSDGHRHDVRAPDYDDWSTPSELGHAGLNGDILVWNPVLEDAFELSSMGIRVDADTLKHQLALTGDEDRLQLEWHQALLRGEMPQTIGGGIGQSRLTMLLLQLPHIGQVQCGVWPAAVRESVPSLL</sequence>
<feature type="chain" id="PRO_1000129116" description="Aspartate--ammonia ligase">
    <location>
        <begin position="1"/>
        <end position="330"/>
    </location>
</feature>
<organism>
    <name type="scientific">Escherichia coli O17:K52:H18 (strain UMN026 / ExPEC)</name>
    <dbReference type="NCBI Taxonomy" id="585056"/>
    <lineage>
        <taxon>Bacteria</taxon>
        <taxon>Pseudomonadati</taxon>
        <taxon>Pseudomonadota</taxon>
        <taxon>Gammaproteobacteria</taxon>
        <taxon>Enterobacterales</taxon>
        <taxon>Enterobacteriaceae</taxon>
        <taxon>Escherichia</taxon>
    </lineage>
</organism>
<reference key="1">
    <citation type="journal article" date="2009" name="PLoS Genet.">
        <title>Organised genome dynamics in the Escherichia coli species results in highly diverse adaptive paths.</title>
        <authorList>
            <person name="Touchon M."/>
            <person name="Hoede C."/>
            <person name="Tenaillon O."/>
            <person name="Barbe V."/>
            <person name="Baeriswyl S."/>
            <person name="Bidet P."/>
            <person name="Bingen E."/>
            <person name="Bonacorsi S."/>
            <person name="Bouchier C."/>
            <person name="Bouvet O."/>
            <person name="Calteau A."/>
            <person name="Chiapello H."/>
            <person name="Clermont O."/>
            <person name="Cruveiller S."/>
            <person name="Danchin A."/>
            <person name="Diard M."/>
            <person name="Dossat C."/>
            <person name="Karoui M.E."/>
            <person name="Frapy E."/>
            <person name="Garry L."/>
            <person name="Ghigo J.M."/>
            <person name="Gilles A.M."/>
            <person name="Johnson J."/>
            <person name="Le Bouguenec C."/>
            <person name="Lescat M."/>
            <person name="Mangenot S."/>
            <person name="Martinez-Jehanne V."/>
            <person name="Matic I."/>
            <person name="Nassif X."/>
            <person name="Oztas S."/>
            <person name="Petit M.A."/>
            <person name="Pichon C."/>
            <person name="Rouy Z."/>
            <person name="Ruf C.S."/>
            <person name="Schneider D."/>
            <person name="Tourret J."/>
            <person name="Vacherie B."/>
            <person name="Vallenet D."/>
            <person name="Medigue C."/>
            <person name="Rocha E.P.C."/>
            <person name="Denamur E."/>
        </authorList>
    </citation>
    <scope>NUCLEOTIDE SEQUENCE [LARGE SCALE GENOMIC DNA]</scope>
    <source>
        <strain>UMN026 / ExPEC</strain>
    </source>
</reference>
<protein>
    <recommendedName>
        <fullName evidence="1">Aspartate--ammonia ligase</fullName>
        <ecNumber evidence="1">6.3.1.1</ecNumber>
    </recommendedName>
    <alternativeName>
        <fullName evidence="1">Asparagine synthetase A</fullName>
    </alternativeName>
</protein>
<dbReference type="EC" id="6.3.1.1" evidence="1"/>
<dbReference type="EMBL" id="CU928163">
    <property type="protein sequence ID" value="CAR15414.1"/>
    <property type="molecule type" value="Genomic_DNA"/>
</dbReference>
<dbReference type="RefSeq" id="WP_000845128.1">
    <property type="nucleotide sequence ID" value="NC_011751.1"/>
</dbReference>
<dbReference type="RefSeq" id="YP_002414909.1">
    <property type="nucleotide sequence ID" value="NC_011751.1"/>
</dbReference>
<dbReference type="SMR" id="B7NF60"/>
<dbReference type="STRING" id="585056.ECUMN_4274"/>
<dbReference type="KEGG" id="eum:ECUMN_4274"/>
<dbReference type="PATRIC" id="fig|585056.7.peg.4446"/>
<dbReference type="HOGENOM" id="CLU_071543_0_0_6"/>
<dbReference type="UniPathway" id="UPA00134">
    <property type="reaction ID" value="UER00194"/>
</dbReference>
<dbReference type="Proteomes" id="UP000007097">
    <property type="component" value="Chromosome"/>
</dbReference>
<dbReference type="GO" id="GO:0005829">
    <property type="term" value="C:cytosol"/>
    <property type="evidence" value="ECO:0007669"/>
    <property type="project" value="TreeGrafter"/>
</dbReference>
<dbReference type="GO" id="GO:0004071">
    <property type="term" value="F:aspartate-ammonia ligase activity"/>
    <property type="evidence" value="ECO:0007669"/>
    <property type="project" value="UniProtKB-UniRule"/>
</dbReference>
<dbReference type="GO" id="GO:0005524">
    <property type="term" value="F:ATP binding"/>
    <property type="evidence" value="ECO:0007669"/>
    <property type="project" value="UniProtKB-UniRule"/>
</dbReference>
<dbReference type="GO" id="GO:0070981">
    <property type="term" value="P:L-asparagine biosynthetic process"/>
    <property type="evidence" value="ECO:0007669"/>
    <property type="project" value="UniProtKB-UniRule"/>
</dbReference>
<dbReference type="CDD" id="cd00645">
    <property type="entry name" value="AsnA"/>
    <property type="match status" value="1"/>
</dbReference>
<dbReference type="FunFam" id="3.30.930.10:FF:000025">
    <property type="entry name" value="Aspartate--ammonia ligase"/>
    <property type="match status" value="1"/>
</dbReference>
<dbReference type="Gene3D" id="3.30.930.10">
    <property type="entry name" value="Bira Bifunctional Protein, Domain 2"/>
    <property type="match status" value="1"/>
</dbReference>
<dbReference type="HAMAP" id="MF_00555">
    <property type="entry name" value="AsnA"/>
    <property type="match status" value="1"/>
</dbReference>
<dbReference type="InterPro" id="IPR006195">
    <property type="entry name" value="aa-tRNA-synth_II"/>
</dbReference>
<dbReference type="InterPro" id="IPR045864">
    <property type="entry name" value="aa-tRNA-synth_II/BPL/LPL"/>
</dbReference>
<dbReference type="InterPro" id="IPR004618">
    <property type="entry name" value="AsnA"/>
</dbReference>
<dbReference type="NCBIfam" id="TIGR00669">
    <property type="entry name" value="asnA"/>
    <property type="match status" value="1"/>
</dbReference>
<dbReference type="PANTHER" id="PTHR30073">
    <property type="entry name" value="ASPARTATE--AMMONIA LIGASE"/>
    <property type="match status" value="1"/>
</dbReference>
<dbReference type="PANTHER" id="PTHR30073:SF5">
    <property type="entry name" value="ASPARTATE--AMMONIA LIGASE"/>
    <property type="match status" value="1"/>
</dbReference>
<dbReference type="Pfam" id="PF03590">
    <property type="entry name" value="AsnA"/>
    <property type="match status" value="1"/>
</dbReference>
<dbReference type="PIRSF" id="PIRSF001555">
    <property type="entry name" value="Asp_ammon_ligase"/>
    <property type="match status" value="1"/>
</dbReference>
<dbReference type="SUPFAM" id="SSF55681">
    <property type="entry name" value="Class II aaRS and biotin synthetases"/>
    <property type="match status" value="1"/>
</dbReference>
<dbReference type="PROSITE" id="PS50862">
    <property type="entry name" value="AA_TRNA_LIGASE_II"/>
    <property type="match status" value="1"/>
</dbReference>
<proteinExistence type="inferred from homology"/>
<name>ASNA_ECOLU</name>
<accession>B7NF60</accession>
<evidence type="ECO:0000255" key="1">
    <source>
        <dbReference type="HAMAP-Rule" id="MF_00555"/>
    </source>
</evidence>
<comment type="catalytic activity">
    <reaction evidence="1">
        <text>L-aspartate + NH4(+) + ATP = L-asparagine + AMP + diphosphate + H(+)</text>
        <dbReference type="Rhea" id="RHEA:11372"/>
        <dbReference type="ChEBI" id="CHEBI:15378"/>
        <dbReference type="ChEBI" id="CHEBI:28938"/>
        <dbReference type="ChEBI" id="CHEBI:29991"/>
        <dbReference type="ChEBI" id="CHEBI:30616"/>
        <dbReference type="ChEBI" id="CHEBI:33019"/>
        <dbReference type="ChEBI" id="CHEBI:58048"/>
        <dbReference type="ChEBI" id="CHEBI:456215"/>
        <dbReference type="EC" id="6.3.1.1"/>
    </reaction>
</comment>
<comment type="pathway">
    <text evidence="1">Amino-acid biosynthesis; L-asparagine biosynthesis; L-asparagine from L-aspartate (ammonia route): step 1/1.</text>
</comment>
<comment type="subcellular location">
    <subcellularLocation>
        <location evidence="1">Cytoplasm</location>
    </subcellularLocation>
</comment>
<comment type="similarity">
    <text evidence="1">Belongs to the class-II aminoacyl-tRNA synthetase family. AsnA subfamily.</text>
</comment>
<gene>
    <name evidence="1" type="primary">asnA</name>
    <name type="ordered locus">ECUMN_4274</name>
</gene>